<evidence type="ECO:0000255" key="1">
    <source>
        <dbReference type="HAMAP-Rule" id="MF_01454"/>
    </source>
</evidence>
<evidence type="ECO:0000255" key="2">
    <source>
        <dbReference type="PROSITE-ProRule" id="PRU01231"/>
    </source>
</evidence>
<dbReference type="EC" id="3.6.5.-" evidence="1"/>
<dbReference type="EMBL" id="CP000030">
    <property type="protein sequence ID" value="AAV86773.1"/>
    <property type="molecule type" value="Genomic_DNA"/>
</dbReference>
<dbReference type="SMR" id="Q5PAA7"/>
<dbReference type="KEGG" id="ama:AM858"/>
<dbReference type="HOGENOM" id="CLU_011747_2_0_5"/>
<dbReference type="GO" id="GO:0005737">
    <property type="term" value="C:cytoplasm"/>
    <property type="evidence" value="ECO:0007669"/>
    <property type="project" value="UniProtKB-SubCell"/>
</dbReference>
<dbReference type="GO" id="GO:0005525">
    <property type="term" value="F:GTP binding"/>
    <property type="evidence" value="ECO:0007669"/>
    <property type="project" value="UniProtKB-UniRule"/>
</dbReference>
<dbReference type="GO" id="GO:0003924">
    <property type="term" value="F:GTPase activity"/>
    <property type="evidence" value="ECO:0007669"/>
    <property type="project" value="UniProtKB-UniRule"/>
</dbReference>
<dbReference type="GO" id="GO:0000287">
    <property type="term" value="F:magnesium ion binding"/>
    <property type="evidence" value="ECO:0007669"/>
    <property type="project" value="InterPro"/>
</dbReference>
<dbReference type="GO" id="GO:0042254">
    <property type="term" value="P:ribosome biogenesis"/>
    <property type="evidence" value="ECO:0007669"/>
    <property type="project" value="UniProtKB-UniRule"/>
</dbReference>
<dbReference type="CDD" id="cd01898">
    <property type="entry name" value="Obg"/>
    <property type="match status" value="1"/>
</dbReference>
<dbReference type="FunFam" id="2.70.210.12:FF:000001">
    <property type="entry name" value="GTPase Obg"/>
    <property type="match status" value="1"/>
</dbReference>
<dbReference type="Gene3D" id="2.70.210.12">
    <property type="entry name" value="GTP1/OBG domain"/>
    <property type="match status" value="1"/>
</dbReference>
<dbReference type="Gene3D" id="3.40.50.300">
    <property type="entry name" value="P-loop containing nucleotide triphosphate hydrolases"/>
    <property type="match status" value="1"/>
</dbReference>
<dbReference type="HAMAP" id="MF_01454">
    <property type="entry name" value="GTPase_Obg"/>
    <property type="match status" value="1"/>
</dbReference>
<dbReference type="InterPro" id="IPR031167">
    <property type="entry name" value="G_OBG"/>
</dbReference>
<dbReference type="InterPro" id="IPR006073">
    <property type="entry name" value="GTP-bd"/>
</dbReference>
<dbReference type="InterPro" id="IPR014100">
    <property type="entry name" value="GTP-bd_Obg/CgtA"/>
</dbReference>
<dbReference type="InterPro" id="IPR006074">
    <property type="entry name" value="GTP1-OBG_CS"/>
</dbReference>
<dbReference type="InterPro" id="IPR006169">
    <property type="entry name" value="GTP1_OBG_dom"/>
</dbReference>
<dbReference type="InterPro" id="IPR036726">
    <property type="entry name" value="GTP1_OBG_dom_sf"/>
</dbReference>
<dbReference type="InterPro" id="IPR045086">
    <property type="entry name" value="OBG_GTPase"/>
</dbReference>
<dbReference type="InterPro" id="IPR027417">
    <property type="entry name" value="P-loop_NTPase"/>
</dbReference>
<dbReference type="NCBIfam" id="TIGR02729">
    <property type="entry name" value="Obg_CgtA"/>
    <property type="match status" value="1"/>
</dbReference>
<dbReference type="NCBIfam" id="NF008956">
    <property type="entry name" value="PRK12299.1"/>
    <property type="match status" value="1"/>
</dbReference>
<dbReference type="PANTHER" id="PTHR11702">
    <property type="entry name" value="DEVELOPMENTALLY REGULATED GTP-BINDING PROTEIN-RELATED"/>
    <property type="match status" value="1"/>
</dbReference>
<dbReference type="PANTHER" id="PTHR11702:SF31">
    <property type="entry name" value="MITOCHONDRIAL RIBOSOME-ASSOCIATED GTPASE 2"/>
    <property type="match status" value="1"/>
</dbReference>
<dbReference type="Pfam" id="PF01018">
    <property type="entry name" value="GTP1_OBG"/>
    <property type="match status" value="1"/>
</dbReference>
<dbReference type="Pfam" id="PF01926">
    <property type="entry name" value="MMR_HSR1"/>
    <property type="match status" value="1"/>
</dbReference>
<dbReference type="PIRSF" id="PIRSF002401">
    <property type="entry name" value="GTP_bd_Obg/CgtA"/>
    <property type="match status" value="1"/>
</dbReference>
<dbReference type="PRINTS" id="PR00326">
    <property type="entry name" value="GTP1OBG"/>
</dbReference>
<dbReference type="SUPFAM" id="SSF82051">
    <property type="entry name" value="Obg GTP-binding protein N-terminal domain"/>
    <property type="match status" value="1"/>
</dbReference>
<dbReference type="SUPFAM" id="SSF52540">
    <property type="entry name" value="P-loop containing nucleoside triphosphate hydrolases"/>
    <property type="match status" value="1"/>
</dbReference>
<dbReference type="PROSITE" id="PS51710">
    <property type="entry name" value="G_OBG"/>
    <property type="match status" value="1"/>
</dbReference>
<dbReference type="PROSITE" id="PS00905">
    <property type="entry name" value="GTP1_OBG"/>
    <property type="match status" value="1"/>
</dbReference>
<dbReference type="PROSITE" id="PS51883">
    <property type="entry name" value="OBG"/>
    <property type="match status" value="1"/>
</dbReference>
<feature type="chain" id="PRO_0000385698" description="GTPase Obg 2">
    <location>
        <begin position="1"/>
        <end position="328"/>
    </location>
</feature>
<feature type="domain" description="Obg" evidence="2">
    <location>
        <begin position="1"/>
        <end position="139"/>
    </location>
</feature>
<feature type="domain" description="OBG-type G" evidence="1">
    <location>
        <begin position="140"/>
        <end position="309"/>
    </location>
</feature>
<feature type="binding site" evidence="1">
    <location>
        <begin position="146"/>
        <end position="153"/>
    </location>
    <ligand>
        <name>GTP</name>
        <dbReference type="ChEBI" id="CHEBI:37565"/>
    </ligand>
</feature>
<feature type="binding site" evidence="1">
    <location>
        <position position="153"/>
    </location>
    <ligand>
        <name>Mg(2+)</name>
        <dbReference type="ChEBI" id="CHEBI:18420"/>
    </ligand>
</feature>
<feature type="binding site" evidence="1">
    <location>
        <begin position="171"/>
        <end position="175"/>
    </location>
    <ligand>
        <name>GTP</name>
        <dbReference type="ChEBI" id="CHEBI:37565"/>
    </ligand>
</feature>
<feature type="binding site" evidence="1">
    <location>
        <position position="173"/>
    </location>
    <ligand>
        <name>Mg(2+)</name>
        <dbReference type="ChEBI" id="CHEBI:18420"/>
    </ligand>
</feature>
<feature type="binding site" evidence="1">
    <location>
        <begin position="192"/>
        <end position="195"/>
    </location>
    <ligand>
        <name>GTP</name>
        <dbReference type="ChEBI" id="CHEBI:37565"/>
    </ligand>
</feature>
<feature type="binding site" evidence="1">
    <location>
        <begin position="259"/>
        <end position="262"/>
    </location>
    <ligand>
        <name>GTP</name>
        <dbReference type="ChEBI" id="CHEBI:37565"/>
    </ligand>
</feature>
<feature type="binding site" evidence="1">
    <location>
        <begin position="290"/>
        <end position="292"/>
    </location>
    <ligand>
        <name>GTP</name>
        <dbReference type="ChEBI" id="CHEBI:37565"/>
    </ligand>
</feature>
<keyword id="KW-0963">Cytoplasm</keyword>
<keyword id="KW-0342">GTP-binding</keyword>
<keyword id="KW-0378">Hydrolase</keyword>
<keyword id="KW-0460">Magnesium</keyword>
<keyword id="KW-0479">Metal-binding</keyword>
<keyword id="KW-0547">Nucleotide-binding</keyword>
<protein>
    <recommendedName>
        <fullName evidence="1">GTPase Obg 2</fullName>
        <ecNumber evidence="1">3.6.5.-</ecNumber>
    </recommendedName>
    <alternativeName>
        <fullName evidence="1">GTP-binding protein Obg 2</fullName>
    </alternativeName>
</protein>
<organism>
    <name type="scientific">Anaplasma marginale (strain St. Maries)</name>
    <dbReference type="NCBI Taxonomy" id="234826"/>
    <lineage>
        <taxon>Bacteria</taxon>
        <taxon>Pseudomonadati</taxon>
        <taxon>Pseudomonadota</taxon>
        <taxon>Alphaproteobacteria</taxon>
        <taxon>Rickettsiales</taxon>
        <taxon>Anaplasmataceae</taxon>
        <taxon>Anaplasma</taxon>
    </lineage>
</organism>
<comment type="function">
    <text evidence="1">An essential GTPase which binds GTP, GDP and possibly (p)ppGpp with moderate affinity, with high nucleotide exchange rates and a fairly low GTP hydrolysis rate. Plays a role in control of the cell cycle, stress response, ribosome biogenesis and in those bacteria that undergo differentiation, in morphogenesis control.</text>
</comment>
<comment type="cofactor">
    <cofactor evidence="1">
        <name>Mg(2+)</name>
        <dbReference type="ChEBI" id="CHEBI:18420"/>
    </cofactor>
</comment>
<comment type="subunit">
    <text evidence="1">Monomer.</text>
</comment>
<comment type="subcellular location">
    <subcellularLocation>
        <location evidence="1">Cytoplasm</location>
    </subcellularLocation>
</comment>
<comment type="similarity">
    <text evidence="1">Belongs to the TRAFAC class OBG-HflX-like GTPase superfamily. OBG GTPase family.</text>
</comment>
<gene>
    <name evidence="1" type="primary">obg2</name>
    <name type="ordered locus">AM858</name>
</gene>
<sequence length="328" mass="35427">MSFRREKFIEFGGPDGGNGGNGGSVIFVASSAVNTLLYFRYNQHIRAENGKAGSGKGKFGAAGRNRVVEVPVGTQLYDEDGNTLIADLNNIGQQYTVAAGGRGGIGNAQYKSSTNRAPTYFTYGTLGEEHCVLLKLKIVSDVGIIGMPNAGKSSLLSRCTASKTKVSDYPFTTLEPHLGVAYANGCELVLADIPGLIENASSGAGLGHKFLKHIERCVILLHLVDCSLPDIVSAYELVRQELKLHSQELAGKQEVVILNKCDLLSEGEVREKQKLLESSTKKEVITLSMGDELDSLIVFLHAQVKKAVVTEPSDTSFDPFLYVHYNKK</sequence>
<accession>Q5PAA7</accession>
<name>OBG2_ANAMM</name>
<reference key="1">
    <citation type="journal article" date="2005" name="Proc. Natl. Acad. Sci. U.S.A.">
        <title>Complete genome sequencing of Anaplasma marginale reveals that the surface is skewed to two superfamilies of outer membrane proteins.</title>
        <authorList>
            <person name="Brayton K.A."/>
            <person name="Kappmeyer L.S."/>
            <person name="Herndon D.R."/>
            <person name="Dark M.J."/>
            <person name="Tibbals D.L."/>
            <person name="Palmer G.H."/>
            <person name="McGuire T.C."/>
            <person name="Knowles D.P. Jr."/>
        </authorList>
    </citation>
    <scope>NUCLEOTIDE SEQUENCE [LARGE SCALE GENOMIC DNA]</scope>
    <source>
        <strain>St. Maries</strain>
    </source>
</reference>
<proteinExistence type="inferred from homology"/>